<feature type="chain" id="PRO_0000191576" description="Sperm protamine P1">
    <location>
        <begin position="1"/>
        <end position="69"/>
    </location>
</feature>
<feature type="region of interest" description="Disordered" evidence="1">
    <location>
        <begin position="1"/>
        <end position="69"/>
    </location>
</feature>
<feature type="compositionally biased region" description="Basic residues" evidence="1">
    <location>
        <begin position="1"/>
        <end position="30"/>
    </location>
</feature>
<feature type="compositionally biased region" description="Basic residues" evidence="1">
    <location>
        <begin position="37"/>
        <end position="69"/>
    </location>
</feature>
<evidence type="ECO:0000256" key="1">
    <source>
        <dbReference type="SAM" id="MobiDB-lite"/>
    </source>
</evidence>
<evidence type="ECO:0000305" key="2"/>
<sequence length="69" mass="8804">MARFRPSRSRSRSLYRRRRRSRRQRSRRGGRQTGPRKITRRGRGRGKSRRRRGRRSMRSSRRRRRRRRN</sequence>
<reference key="1">
    <citation type="journal article" date="1993" name="Eur. J. Biochem.">
        <title>Evolution of the monotremes. The sequences of the protamine P1 genes of platypus and echidna.</title>
        <authorList>
            <person name="Retief J.D."/>
            <person name="Winkfein R.J."/>
            <person name="Dixon G.H."/>
        </authorList>
    </citation>
    <scope>NUCLEOTIDE SEQUENCE [GENOMIC DNA]</scope>
</reference>
<protein>
    <recommendedName>
        <fullName>Sperm protamine P1</fullName>
    </recommendedName>
</protein>
<proteinExistence type="evidence at transcript level"/>
<organism>
    <name type="scientific">Tachyglossus aculeatus aculeatus</name>
    <name type="common">Southeast Australian short-beaked echidna</name>
    <dbReference type="NCBI Taxonomy" id="49271"/>
    <lineage>
        <taxon>Eukaryota</taxon>
        <taxon>Metazoa</taxon>
        <taxon>Chordata</taxon>
        <taxon>Craniata</taxon>
        <taxon>Vertebrata</taxon>
        <taxon>Euteleostomi</taxon>
        <taxon>Mammalia</taxon>
        <taxon>Monotremata</taxon>
        <taxon>Tachyglossidae</taxon>
        <taxon>Tachyglossus</taxon>
    </lineage>
</organism>
<accession>P35311</accession>
<dbReference type="EMBL" id="Z26848">
    <property type="protein sequence ID" value="CAA81444.1"/>
    <property type="molecule type" value="Genomic_DNA"/>
</dbReference>
<dbReference type="PIR" id="S39424">
    <property type="entry name" value="S39424"/>
</dbReference>
<dbReference type="GO" id="GO:0000786">
    <property type="term" value="C:nucleosome"/>
    <property type="evidence" value="ECO:0007669"/>
    <property type="project" value="UniProtKB-KW"/>
</dbReference>
<dbReference type="GO" id="GO:0005634">
    <property type="term" value="C:nucleus"/>
    <property type="evidence" value="ECO:0007669"/>
    <property type="project" value="UniProtKB-SubCell"/>
</dbReference>
<dbReference type="GO" id="GO:0003677">
    <property type="term" value="F:DNA binding"/>
    <property type="evidence" value="ECO:0007669"/>
    <property type="project" value="UniProtKB-KW"/>
</dbReference>
<dbReference type="GO" id="GO:0030261">
    <property type="term" value="P:chromosome condensation"/>
    <property type="evidence" value="ECO:0007669"/>
    <property type="project" value="UniProtKB-KW"/>
</dbReference>
<dbReference type="GO" id="GO:0035092">
    <property type="term" value="P:sperm DNA condensation"/>
    <property type="evidence" value="ECO:0007669"/>
    <property type="project" value="InterPro"/>
</dbReference>
<dbReference type="InterPro" id="IPR000221">
    <property type="entry name" value="Protamine_P1"/>
</dbReference>
<dbReference type="PROSITE" id="PS00048">
    <property type="entry name" value="PROTAMINE_P1"/>
    <property type="match status" value="1"/>
</dbReference>
<gene>
    <name type="primary">PRM1</name>
    <name type="synonym">PRM-1</name>
</gene>
<comment type="function">
    <text>Protamines substitute for histones in the chromatin of sperm during the haploid phase of spermatogenesis. They compact sperm DNA into a highly condensed, stable and inactive complex.</text>
</comment>
<comment type="subcellular location">
    <subcellularLocation>
        <location>Nucleus</location>
    </subcellularLocation>
    <subcellularLocation>
        <location>Chromosome</location>
    </subcellularLocation>
</comment>
<comment type="tissue specificity">
    <text>Testis.</text>
</comment>
<comment type="similarity">
    <text evidence="2">Belongs to the protamine P1 family.</text>
</comment>
<name>HSP1_TACAC</name>
<keyword id="KW-0158">Chromosome</keyword>
<keyword id="KW-0217">Developmental protein</keyword>
<keyword id="KW-0221">Differentiation</keyword>
<keyword id="KW-0226">DNA condensation</keyword>
<keyword id="KW-0238">DNA-binding</keyword>
<keyword id="KW-0544">Nucleosome core</keyword>
<keyword id="KW-0539">Nucleus</keyword>
<keyword id="KW-0744">Spermatogenesis</keyword>